<proteinExistence type="inferred from homology"/>
<evidence type="ECO:0000255" key="1">
    <source>
        <dbReference type="HAMAP-Rule" id="MF_00172"/>
    </source>
</evidence>
<comment type="function">
    <text evidence="1">Catalyzes the transfer of a methyl group from 5-methyltetrahydrofolate to homocysteine resulting in methionine formation.</text>
</comment>
<comment type="catalytic activity">
    <reaction evidence="1">
        <text>5-methyltetrahydropteroyltri-L-glutamate + L-homocysteine = tetrahydropteroyltri-L-glutamate + L-methionine</text>
        <dbReference type="Rhea" id="RHEA:21196"/>
        <dbReference type="ChEBI" id="CHEBI:57844"/>
        <dbReference type="ChEBI" id="CHEBI:58140"/>
        <dbReference type="ChEBI" id="CHEBI:58199"/>
        <dbReference type="ChEBI" id="CHEBI:58207"/>
        <dbReference type="EC" id="2.1.1.14"/>
    </reaction>
</comment>
<comment type="cofactor">
    <cofactor evidence="1">
        <name>Zn(2+)</name>
        <dbReference type="ChEBI" id="CHEBI:29105"/>
    </cofactor>
    <text evidence="1">Binds 1 zinc ion per subunit.</text>
</comment>
<comment type="pathway">
    <text evidence="1">Amino-acid biosynthesis; L-methionine biosynthesis via de novo pathway; L-methionine from L-homocysteine (MetE route): step 1/1.</text>
</comment>
<comment type="similarity">
    <text evidence="1">Belongs to the vitamin-B12 independent methionine synthase family.</text>
</comment>
<name>METE_PSEP7</name>
<gene>
    <name evidence="1" type="primary">metE</name>
    <name type="ordered locus">PSPA7_1556</name>
</gene>
<feature type="chain" id="PRO_1000017261" description="5-methyltetrahydropteroyltriglutamate--homocysteine methyltransferase">
    <location>
        <begin position="1"/>
        <end position="763"/>
    </location>
</feature>
<feature type="active site" description="Proton donor" evidence="1">
    <location>
        <position position="701"/>
    </location>
</feature>
<feature type="binding site" evidence="1">
    <location>
        <begin position="16"/>
        <end position="19"/>
    </location>
    <ligand>
        <name>5-methyltetrahydropteroyltri-L-glutamate</name>
        <dbReference type="ChEBI" id="CHEBI:58207"/>
    </ligand>
</feature>
<feature type="binding site" evidence="1">
    <location>
        <position position="117"/>
    </location>
    <ligand>
        <name>5-methyltetrahydropteroyltri-L-glutamate</name>
        <dbReference type="ChEBI" id="CHEBI:58207"/>
    </ligand>
</feature>
<feature type="binding site" evidence="1">
    <location>
        <begin position="438"/>
        <end position="440"/>
    </location>
    <ligand>
        <name>L-homocysteine</name>
        <dbReference type="ChEBI" id="CHEBI:58199"/>
    </ligand>
</feature>
<feature type="binding site" evidence="1">
    <location>
        <begin position="438"/>
        <end position="440"/>
    </location>
    <ligand>
        <name>L-methionine</name>
        <dbReference type="ChEBI" id="CHEBI:57844"/>
    </ligand>
</feature>
<feature type="binding site" evidence="1">
    <location>
        <position position="491"/>
    </location>
    <ligand>
        <name>L-homocysteine</name>
        <dbReference type="ChEBI" id="CHEBI:58199"/>
    </ligand>
</feature>
<feature type="binding site" evidence="1">
    <location>
        <position position="491"/>
    </location>
    <ligand>
        <name>L-methionine</name>
        <dbReference type="ChEBI" id="CHEBI:57844"/>
    </ligand>
</feature>
<feature type="binding site" evidence="1">
    <location>
        <begin position="522"/>
        <end position="523"/>
    </location>
    <ligand>
        <name>5-methyltetrahydropteroyltri-L-glutamate</name>
        <dbReference type="ChEBI" id="CHEBI:58207"/>
    </ligand>
</feature>
<feature type="binding site" evidence="1">
    <location>
        <position position="568"/>
    </location>
    <ligand>
        <name>5-methyltetrahydropteroyltri-L-glutamate</name>
        <dbReference type="ChEBI" id="CHEBI:58207"/>
    </ligand>
</feature>
<feature type="binding site" evidence="1">
    <location>
        <position position="606"/>
    </location>
    <ligand>
        <name>L-homocysteine</name>
        <dbReference type="ChEBI" id="CHEBI:58199"/>
    </ligand>
</feature>
<feature type="binding site" evidence="1">
    <location>
        <position position="606"/>
    </location>
    <ligand>
        <name>L-methionine</name>
        <dbReference type="ChEBI" id="CHEBI:57844"/>
    </ligand>
</feature>
<feature type="binding site" evidence="1">
    <location>
        <position position="612"/>
    </location>
    <ligand>
        <name>5-methyltetrahydropteroyltri-L-glutamate</name>
        <dbReference type="ChEBI" id="CHEBI:58207"/>
    </ligand>
</feature>
<feature type="binding site" evidence="1">
    <location>
        <position position="648"/>
    </location>
    <ligand>
        <name>Zn(2+)</name>
        <dbReference type="ChEBI" id="CHEBI:29105"/>
        <note>catalytic</note>
    </ligand>
</feature>
<feature type="binding site" evidence="1">
    <location>
        <position position="650"/>
    </location>
    <ligand>
        <name>Zn(2+)</name>
        <dbReference type="ChEBI" id="CHEBI:29105"/>
        <note>catalytic</note>
    </ligand>
</feature>
<feature type="binding site" evidence="1">
    <location>
        <position position="672"/>
    </location>
    <ligand>
        <name>Zn(2+)</name>
        <dbReference type="ChEBI" id="CHEBI:29105"/>
        <note>catalytic</note>
    </ligand>
</feature>
<feature type="binding site" evidence="1">
    <location>
        <position position="733"/>
    </location>
    <ligand>
        <name>Zn(2+)</name>
        <dbReference type="ChEBI" id="CHEBI:29105"/>
        <note>catalytic</note>
    </ligand>
</feature>
<sequence length="763" mass="86085">MALAHTLGFPRIGRDRELKKALEAYWKGELDQPGLLQVGRELRRQHWQLQKDAGIELLPVGDFAWYDQVLAHSLAFGVIPERFRPADGQPTLDTLFAMARGVAQGCCGGAHAQEMTKWFDTNYHYLVPEFTVDQAFSLSWTQLFEEVDEALALGHAVKPVLIGPLSYLWLGKAKGGEFDRLELLERLLPVYGEIFQGLAARGVEWVQIDEPILVLDLPQAWKNAFERAYNLIQREPLKKLVATYFGGLEDNLGLAAGLPVDGLHIDLVRAPGQYPTILDRLPAYKVLSLGLVNGRNVWRCDLEKALEVLAHAHERLGERLWVAPSCSLLHSPVDLCREDQLDEELQSWLAFAVQKCEEVAILARALVEPEAPEVRQAFEVSRRVEASRRRSTRIHKREVQARLAAVRPQDSRRASAFAERAVQQRARLELPAFPTTTIGSFPQTSAIRLARQSWKQGRLSQAEYTEAMHSEIRHAVQVQERLGLDVLVHGEAERNDMVEYFAEQLDGYAFTRFGWVQSYGSRCVKPAVIYGDLSRPRPMTVEWIRYAQSLTGKVMKGMLTGPVTMLMWSFPREDVSREVQARQLALALRDEVSDLEQAGIRIVQIDEAAFREGLPLRRADWPHYLEWATEAFRLCASGVRDETQIHTHMCYSEFNDVIESIAAMDADVITIETSRSDMELLEAFEAFAYPNEIGPGVYDIHSPRVPAVEDMVKLLSKAAERIPAARLWVNPDCGLKTRAWAETEAALANMVAAARQLRQANLA</sequence>
<accession>A6V1K5</accession>
<protein>
    <recommendedName>
        <fullName evidence="1">5-methyltetrahydropteroyltriglutamate--homocysteine methyltransferase</fullName>
        <ecNumber evidence="1">2.1.1.14</ecNumber>
    </recommendedName>
    <alternativeName>
        <fullName evidence="1">Cobalamin-independent methionine synthase</fullName>
    </alternativeName>
    <alternativeName>
        <fullName evidence="1">Methionine synthase, vitamin-B12 independent isozyme</fullName>
    </alternativeName>
</protein>
<keyword id="KW-0028">Amino-acid biosynthesis</keyword>
<keyword id="KW-0479">Metal-binding</keyword>
<keyword id="KW-0486">Methionine biosynthesis</keyword>
<keyword id="KW-0489">Methyltransferase</keyword>
<keyword id="KW-0677">Repeat</keyword>
<keyword id="KW-0808">Transferase</keyword>
<keyword id="KW-0862">Zinc</keyword>
<reference key="1">
    <citation type="submission" date="2007-06" db="EMBL/GenBank/DDBJ databases">
        <authorList>
            <person name="Dodson R.J."/>
            <person name="Harkins D."/>
            <person name="Paulsen I.T."/>
        </authorList>
    </citation>
    <scope>NUCLEOTIDE SEQUENCE [LARGE SCALE GENOMIC DNA]</scope>
    <source>
        <strain>DSM 24068 / PA7</strain>
    </source>
</reference>
<organism>
    <name type="scientific">Pseudomonas paraeruginosa (strain DSM 24068 / PA7)</name>
    <name type="common">Pseudomonas aeruginosa (strain PA7)</name>
    <dbReference type="NCBI Taxonomy" id="381754"/>
    <lineage>
        <taxon>Bacteria</taxon>
        <taxon>Pseudomonadati</taxon>
        <taxon>Pseudomonadota</taxon>
        <taxon>Gammaproteobacteria</taxon>
        <taxon>Pseudomonadales</taxon>
        <taxon>Pseudomonadaceae</taxon>
        <taxon>Pseudomonas</taxon>
        <taxon>Pseudomonas paraeruginosa</taxon>
    </lineage>
</organism>
<dbReference type="EC" id="2.1.1.14" evidence="1"/>
<dbReference type="EMBL" id="CP000744">
    <property type="protein sequence ID" value="ABR84681.1"/>
    <property type="molecule type" value="Genomic_DNA"/>
</dbReference>
<dbReference type="RefSeq" id="WP_012074732.1">
    <property type="nucleotide sequence ID" value="NC_009656.1"/>
</dbReference>
<dbReference type="SMR" id="A6V1K5"/>
<dbReference type="KEGG" id="pap:PSPA7_1556"/>
<dbReference type="HOGENOM" id="CLU_013175_0_0_6"/>
<dbReference type="UniPathway" id="UPA00051">
    <property type="reaction ID" value="UER00082"/>
</dbReference>
<dbReference type="Proteomes" id="UP000001582">
    <property type="component" value="Chromosome"/>
</dbReference>
<dbReference type="GO" id="GO:0003871">
    <property type="term" value="F:5-methyltetrahydropteroyltriglutamate-homocysteine S-methyltransferase activity"/>
    <property type="evidence" value="ECO:0007669"/>
    <property type="project" value="UniProtKB-UniRule"/>
</dbReference>
<dbReference type="GO" id="GO:0008270">
    <property type="term" value="F:zinc ion binding"/>
    <property type="evidence" value="ECO:0007669"/>
    <property type="project" value="InterPro"/>
</dbReference>
<dbReference type="GO" id="GO:0009086">
    <property type="term" value="P:methionine biosynthetic process"/>
    <property type="evidence" value="ECO:0007669"/>
    <property type="project" value="UniProtKB-UniRule"/>
</dbReference>
<dbReference type="GO" id="GO:0032259">
    <property type="term" value="P:methylation"/>
    <property type="evidence" value="ECO:0007669"/>
    <property type="project" value="UniProtKB-KW"/>
</dbReference>
<dbReference type="CDD" id="cd03311">
    <property type="entry name" value="CIMS_C_terminal_like"/>
    <property type="match status" value="1"/>
</dbReference>
<dbReference type="CDD" id="cd03312">
    <property type="entry name" value="CIMS_N_terminal_like"/>
    <property type="match status" value="1"/>
</dbReference>
<dbReference type="FunFam" id="3.20.20.210:FF:000002">
    <property type="entry name" value="5-methyltetrahydropteroyltriglutamate--homocysteine methyltransferase"/>
    <property type="match status" value="1"/>
</dbReference>
<dbReference type="FunFam" id="3.20.20.210:FF:000003">
    <property type="entry name" value="5-methyltetrahydropteroyltriglutamate--homocysteine methyltransferase"/>
    <property type="match status" value="1"/>
</dbReference>
<dbReference type="Gene3D" id="3.20.20.210">
    <property type="match status" value="2"/>
</dbReference>
<dbReference type="HAMAP" id="MF_00172">
    <property type="entry name" value="Meth_synth"/>
    <property type="match status" value="1"/>
</dbReference>
<dbReference type="InterPro" id="IPR013215">
    <property type="entry name" value="Cbl-indep_Met_Synth_N"/>
</dbReference>
<dbReference type="InterPro" id="IPR006276">
    <property type="entry name" value="Cobalamin-indep_Met_synthase"/>
</dbReference>
<dbReference type="InterPro" id="IPR002629">
    <property type="entry name" value="Met_Synth_C/arc"/>
</dbReference>
<dbReference type="InterPro" id="IPR038071">
    <property type="entry name" value="UROD/MetE-like_sf"/>
</dbReference>
<dbReference type="NCBIfam" id="TIGR01371">
    <property type="entry name" value="met_syn_B12ind"/>
    <property type="match status" value="1"/>
</dbReference>
<dbReference type="NCBIfam" id="NF003556">
    <property type="entry name" value="PRK05222.1"/>
    <property type="match status" value="1"/>
</dbReference>
<dbReference type="PANTHER" id="PTHR30519">
    <property type="entry name" value="5-METHYLTETRAHYDROPTEROYLTRIGLUTAMATE--HOMOCYSTEINE METHYLTRANSFERASE"/>
    <property type="match status" value="1"/>
</dbReference>
<dbReference type="Pfam" id="PF08267">
    <property type="entry name" value="Meth_synt_1"/>
    <property type="match status" value="1"/>
</dbReference>
<dbReference type="Pfam" id="PF01717">
    <property type="entry name" value="Meth_synt_2"/>
    <property type="match status" value="1"/>
</dbReference>
<dbReference type="PIRSF" id="PIRSF000382">
    <property type="entry name" value="MeTrfase_B12_ind"/>
    <property type="match status" value="1"/>
</dbReference>
<dbReference type="SUPFAM" id="SSF51726">
    <property type="entry name" value="UROD/MetE-like"/>
    <property type="match status" value="2"/>
</dbReference>